<proteinExistence type="inferred from homology"/>
<reference key="1">
    <citation type="journal article" date="2002" name="Science">
        <title>50 million years of genomic stasis in endosymbiotic bacteria.</title>
        <authorList>
            <person name="Tamas I."/>
            <person name="Klasson L."/>
            <person name="Canbaeck B."/>
            <person name="Naeslund A.K."/>
            <person name="Eriksson A.-S."/>
            <person name="Wernegreen J.J."/>
            <person name="Sandstroem J.P."/>
            <person name="Moran N.A."/>
            <person name="Andersson S.G.E."/>
        </authorList>
    </citation>
    <scope>NUCLEOTIDE SEQUENCE [LARGE SCALE GENOMIC DNA]</scope>
    <source>
        <strain>Sg</strain>
    </source>
</reference>
<keyword id="KW-0963">Cytoplasm</keyword>
<keyword id="KW-0269">Exonuclease</keyword>
<keyword id="KW-0378">Hydrolase</keyword>
<keyword id="KW-0540">Nuclease</keyword>
<keyword id="KW-0694">RNA-binding</keyword>
<dbReference type="EC" id="3.1.13.1"/>
<dbReference type="EMBL" id="AE013218">
    <property type="protein sequence ID" value="AAM67814.1"/>
    <property type="molecule type" value="Genomic_DNA"/>
</dbReference>
<dbReference type="RefSeq" id="WP_011053781.1">
    <property type="nucleotide sequence ID" value="NC_004061.1"/>
</dbReference>
<dbReference type="SMR" id="Q8K9Q5"/>
<dbReference type="STRING" id="198804.BUsg_256"/>
<dbReference type="GeneID" id="93003726"/>
<dbReference type="KEGG" id="bas:BUsg_256"/>
<dbReference type="eggNOG" id="COG4776">
    <property type="taxonomic scope" value="Bacteria"/>
</dbReference>
<dbReference type="HOGENOM" id="CLU_002333_7_3_6"/>
<dbReference type="Proteomes" id="UP000000416">
    <property type="component" value="Chromosome"/>
</dbReference>
<dbReference type="GO" id="GO:0005829">
    <property type="term" value="C:cytosol"/>
    <property type="evidence" value="ECO:0007669"/>
    <property type="project" value="TreeGrafter"/>
</dbReference>
<dbReference type="GO" id="GO:0008859">
    <property type="term" value="F:exoribonuclease II activity"/>
    <property type="evidence" value="ECO:0007669"/>
    <property type="project" value="UniProtKB-UniRule"/>
</dbReference>
<dbReference type="GO" id="GO:0003723">
    <property type="term" value="F:RNA binding"/>
    <property type="evidence" value="ECO:0007669"/>
    <property type="project" value="UniProtKB-KW"/>
</dbReference>
<dbReference type="GO" id="GO:0006402">
    <property type="term" value="P:mRNA catabolic process"/>
    <property type="evidence" value="ECO:0007669"/>
    <property type="project" value="UniProtKB-UniRule"/>
</dbReference>
<dbReference type="Gene3D" id="2.40.50.640">
    <property type="match status" value="1"/>
</dbReference>
<dbReference type="Gene3D" id="2.40.50.140">
    <property type="entry name" value="Nucleic acid-binding proteins"/>
    <property type="match status" value="2"/>
</dbReference>
<dbReference type="HAMAP" id="MF_01036">
    <property type="entry name" value="RNase_II"/>
    <property type="match status" value="1"/>
</dbReference>
<dbReference type="InterPro" id="IPR011129">
    <property type="entry name" value="CSD"/>
</dbReference>
<dbReference type="InterPro" id="IPR012340">
    <property type="entry name" value="NA-bd_OB-fold"/>
</dbReference>
<dbReference type="InterPro" id="IPR013223">
    <property type="entry name" value="RNase_B_OB_dom"/>
</dbReference>
<dbReference type="InterPro" id="IPR011804">
    <property type="entry name" value="RNase_II"/>
</dbReference>
<dbReference type="InterPro" id="IPR001900">
    <property type="entry name" value="RNase_II/R"/>
</dbReference>
<dbReference type="InterPro" id="IPR022966">
    <property type="entry name" value="RNase_II/R_CS"/>
</dbReference>
<dbReference type="InterPro" id="IPR004476">
    <property type="entry name" value="RNase_II/RNase_R"/>
</dbReference>
<dbReference type="InterPro" id="IPR050180">
    <property type="entry name" value="RNR_Ribonuclease"/>
</dbReference>
<dbReference type="NCBIfam" id="TIGR00358">
    <property type="entry name" value="3_prime_RNase"/>
    <property type="match status" value="1"/>
</dbReference>
<dbReference type="NCBIfam" id="NF003455">
    <property type="entry name" value="PRK05054.1"/>
    <property type="match status" value="1"/>
</dbReference>
<dbReference type="NCBIfam" id="TIGR02062">
    <property type="entry name" value="RNase_B"/>
    <property type="match status" value="1"/>
</dbReference>
<dbReference type="PANTHER" id="PTHR23355:SF37">
    <property type="entry name" value="EXORIBONUCLEASE 2"/>
    <property type="match status" value="1"/>
</dbReference>
<dbReference type="PANTHER" id="PTHR23355">
    <property type="entry name" value="RIBONUCLEASE"/>
    <property type="match status" value="1"/>
</dbReference>
<dbReference type="Pfam" id="PF08206">
    <property type="entry name" value="OB_RNB"/>
    <property type="match status" value="1"/>
</dbReference>
<dbReference type="Pfam" id="PF00773">
    <property type="entry name" value="RNB"/>
    <property type="match status" value="1"/>
</dbReference>
<dbReference type="SMART" id="SM00357">
    <property type="entry name" value="CSP"/>
    <property type="match status" value="1"/>
</dbReference>
<dbReference type="SMART" id="SM00955">
    <property type="entry name" value="RNB"/>
    <property type="match status" value="1"/>
</dbReference>
<dbReference type="SUPFAM" id="SSF50249">
    <property type="entry name" value="Nucleic acid-binding proteins"/>
    <property type="match status" value="4"/>
</dbReference>
<dbReference type="PROSITE" id="PS01175">
    <property type="entry name" value="RIBONUCLEASE_II"/>
    <property type="match status" value="1"/>
</dbReference>
<feature type="chain" id="PRO_0000166378" description="Exoribonuclease 2">
    <location>
        <begin position="1"/>
        <end position="646"/>
    </location>
</feature>
<feature type="domain" description="RNB" evidence="2">
    <location>
        <begin position="190"/>
        <end position="517"/>
    </location>
</feature>
<feature type="domain" description="S1 motif">
    <location>
        <begin position="563"/>
        <end position="645"/>
    </location>
</feature>
<evidence type="ECO:0000250" key="1"/>
<evidence type="ECO:0000255" key="2"/>
<evidence type="ECO:0000305" key="3"/>
<accession>Q8K9Q5</accession>
<name>RNB_BUCAP</name>
<comment type="function">
    <text evidence="1">Involved in mRNA degradation. Hydrolyzes single-stranded polyribonucleotides processively in the 3' to 5' direction (By similarity).</text>
</comment>
<comment type="catalytic activity">
    <reaction>
        <text>Exonucleolytic cleavage in the 3'- to 5'-direction to yield nucleoside 5'-phosphates.</text>
        <dbReference type="EC" id="3.1.13.1"/>
    </reaction>
</comment>
<comment type="subcellular location">
    <subcellularLocation>
        <location evidence="1">Cytoplasm</location>
    </subcellularLocation>
</comment>
<comment type="similarity">
    <text evidence="3">Belongs to the RNR ribonuclease family. RNase II subfamily.</text>
</comment>
<sequence length="646" mass="74775">MFQNNPLLAQLKKNLHAKTPRVEGIVKSTERGFGFLEVDAQKSYFIPPKNMKNVMHGDKISAVLKIEKDREIAEPEKLIEPFLNRFVGKIEKKDNKLFIFPDYPFLKDFIACRPKKSCVHVFQTGDWAVAKLIQHKLNGNHIFYAELIEEIVKANNPLIPWWVTLSRHNLERKEPKIEKDDLILKNNSHREDLTHLNFITIDNFNTKDIDDALFIEEIHNGNLRLIVAIADPTSYIKSGSKLDITAAKRGFTNYLPGFNVPMLPRSLSEDICSLNPHERRPVLACCITILKDGNICSKINFFLAWIKSKSKLSYDNVSDWIEKKSSWKPETKSIENQILLLHRLCLLRIKWRTSNAVLFQDSLEYRFQFSETGIVEDVVIEKRRIAHKIIEESMIIANISAANFLSKNLGFGIYNTHAGFDPINAENVVSFLNNYNLKFTVKEITTLKGFCNLRRVLNILSDNYINSRIRRYQSFGDFSITPSPHFALGLVEYATWTSPIRKYSDMINHRLLKSIINQDTNITKPSEDIKLKISEQKRRNRIAERDISDWLYTLLLQKKEFKNKKFNAEIIDVSRSGIRAKLLENGANVFIPALFLHPIREELVFNQETGKVFIKGVLYYKISDLITVVLSEIRLQTRSIIARIDH</sequence>
<protein>
    <recommendedName>
        <fullName>Exoribonuclease 2</fullName>
        <ecNumber>3.1.13.1</ecNumber>
    </recommendedName>
    <alternativeName>
        <fullName>Exoribonuclease II</fullName>
        <shortName>RNase II</shortName>
        <shortName>Ribonuclease II</shortName>
    </alternativeName>
</protein>
<gene>
    <name type="primary">rnb</name>
    <name type="ordered locus">BUsg_256</name>
</gene>
<organism>
    <name type="scientific">Buchnera aphidicola subsp. Schizaphis graminum (strain Sg)</name>
    <dbReference type="NCBI Taxonomy" id="198804"/>
    <lineage>
        <taxon>Bacteria</taxon>
        <taxon>Pseudomonadati</taxon>
        <taxon>Pseudomonadota</taxon>
        <taxon>Gammaproteobacteria</taxon>
        <taxon>Enterobacterales</taxon>
        <taxon>Erwiniaceae</taxon>
        <taxon>Buchnera</taxon>
    </lineage>
</organism>